<organism>
    <name type="scientific">Hyphomonas neptunium (strain ATCC 15444)</name>
    <dbReference type="NCBI Taxonomy" id="228405"/>
    <lineage>
        <taxon>Bacteria</taxon>
        <taxon>Pseudomonadati</taxon>
        <taxon>Pseudomonadota</taxon>
        <taxon>Alphaproteobacteria</taxon>
        <taxon>Hyphomonadales</taxon>
        <taxon>Hyphomonadaceae</taxon>
        <taxon>Hyphomonas</taxon>
    </lineage>
</organism>
<reference key="1">
    <citation type="journal article" date="2006" name="J. Bacteriol.">
        <title>Comparative genomic evidence for a close relationship between the dimorphic prosthecate bacteria Hyphomonas neptunium and Caulobacter crescentus.</title>
        <authorList>
            <person name="Badger J.H."/>
            <person name="Hoover T.R."/>
            <person name="Brun Y.V."/>
            <person name="Weiner R.M."/>
            <person name="Laub M.T."/>
            <person name="Alexandre G."/>
            <person name="Mrazek J."/>
            <person name="Ren Q."/>
            <person name="Paulsen I.T."/>
            <person name="Nelson K.E."/>
            <person name="Khouri H.M."/>
            <person name="Radune D."/>
            <person name="Sosa J."/>
            <person name="Dodson R.J."/>
            <person name="Sullivan S.A."/>
            <person name="Rosovitz M.J."/>
            <person name="Madupu R."/>
            <person name="Brinkac L.M."/>
            <person name="Durkin A.S."/>
            <person name="Daugherty S.C."/>
            <person name="Kothari S.P."/>
            <person name="Giglio M.G."/>
            <person name="Zhou L."/>
            <person name="Haft D.H."/>
            <person name="Selengut J.D."/>
            <person name="Davidsen T.M."/>
            <person name="Yang Q."/>
            <person name="Zafar N."/>
            <person name="Ward N.L."/>
        </authorList>
    </citation>
    <scope>NUCLEOTIDE SEQUENCE [LARGE SCALE GENOMIC DNA]</scope>
    <source>
        <strain>ATCC 15444</strain>
    </source>
</reference>
<gene>
    <name evidence="1" type="primary">gpmA</name>
    <name type="ordered locus">HNE_0031</name>
</gene>
<evidence type="ECO:0000255" key="1">
    <source>
        <dbReference type="HAMAP-Rule" id="MF_01039"/>
    </source>
</evidence>
<sequence>MTKLALIRHGQSAWNLENRFTGWWDADLTAQGEAEARHSGKLLAEVDADFRAGFTSVQTRAIRTMWLALTEMKRVWLPIEKDWHLNERHYGGLTGLNKAETAAKHGEDQVHVWRRSYDIPPPPLEVGSTFDLSTDPRYRGIDIPNTESLKTTLDRVLPYWQQKIAPGLIAGTDTMIAAHGNSLRALVKHLFNVPDETITGLEIPTGNPLLIELDPNLKPVSVRYLDAERAHSLPDLP</sequence>
<comment type="function">
    <text evidence="1">Catalyzes the interconversion of 2-phosphoglycerate and 3-phosphoglycerate.</text>
</comment>
<comment type="catalytic activity">
    <reaction evidence="1">
        <text>(2R)-2-phosphoglycerate = (2R)-3-phosphoglycerate</text>
        <dbReference type="Rhea" id="RHEA:15901"/>
        <dbReference type="ChEBI" id="CHEBI:58272"/>
        <dbReference type="ChEBI" id="CHEBI:58289"/>
        <dbReference type="EC" id="5.4.2.11"/>
    </reaction>
</comment>
<comment type="pathway">
    <text evidence="1">Carbohydrate degradation; glycolysis; pyruvate from D-glyceraldehyde 3-phosphate: step 3/5.</text>
</comment>
<comment type="subunit">
    <text evidence="1">Homodimer.</text>
</comment>
<comment type="similarity">
    <text evidence="1">Belongs to the phosphoglycerate mutase family. BPG-dependent PGAM subfamily.</text>
</comment>
<feature type="chain" id="PRO_1000064066" description="2,3-bisphosphoglycerate-dependent phosphoglycerate mutase">
    <location>
        <begin position="1"/>
        <end position="237"/>
    </location>
</feature>
<feature type="active site" description="Tele-phosphohistidine intermediate" evidence="1">
    <location>
        <position position="9"/>
    </location>
</feature>
<feature type="active site" description="Proton donor/acceptor" evidence="1">
    <location>
        <position position="87"/>
    </location>
</feature>
<feature type="binding site" evidence="1">
    <location>
        <begin position="8"/>
        <end position="15"/>
    </location>
    <ligand>
        <name>substrate</name>
    </ligand>
</feature>
<feature type="binding site" evidence="1">
    <location>
        <begin position="21"/>
        <end position="22"/>
    </location>
    <ligand>
        <name>substrate</name>
    </ligand>
</feature>
<feature type="binding site" evidence="1">
    <location>
        <position position="60"/>
    </location>
    <ligand>
        <name>substrate</name>
    </ligand>
</feature>
<feature type="binding site" evidence="1">
    <location>
        <begin position="87"/>
        <end position="90"/>
    </location>
    <ligand>
        <name>substrate</name>
    </ligand>
</feature>
<feature type="binding site" evidence="1">
    <location>
        <position position="98"/>
    </location>
    <ligand>
        <name>substrate</name>
    </ligand>
</feature>
<feature type="binding site" evidence="1">
    <location>
        <begin position="114"/>
        <end position="115"/>
    </location>
    <ligand>
        <name>substrate</name>
    </ligand>
</feature>
<feature type="binding site" evidence="1">
    <location>
        <begin position="180"/>
        <end position="181"/>
    </location>
    <ligand>
        <name>substrate</name>
    </ligand>
</feature>
<feature type="site" description="Transition state stabilizer" evidence="1">
    <location>
        <position position="179"/>
    </location>
</feature>
<proteinExistence type="inferred from homology"/>
<accession>Q0C678</accession>
<name>GPMA_HYPNA</name>
<keyword id="KW-0312">Gluconeogenesis</keyword>
<keyword id="KW-0324">Glycolysis</keyword>
<keyword id="KW-0413">Isomerase</keyword>
<keyword id="KW-1185">Reference proteome</keyword>
<protein>
    <recommendedName>
        <fullName evidence="1">2,3-bisphosphoglycerate-dependent phosphoglycerate mutase</fullName>
        <shortName evidence="1">BPG-dependent PGAM</shortName>
        <shortName evidence="1">PGAM</shortName>
        <shortName evidence="1">Phosphoglyceromutase</shortName>
        <shortName evidence="1">dPGM</shortName>
        <ecNumber evidence="1">5.4.2.11</ecNumber>
    </recommendedName>
</protein>
<dbReference type="EC" id="5.4.2.11" evidence="1"/>
<dbReference type="EMBL" id="CP000158">
    <property type="protein sequence ID" value="ABI75447.1"/>
    <property type="molecule type" value="Genomic_DNA"/>
</dbReference>
<dbReference type="RefSeq" id="WP_011645065.1">
    <property type="nucleotide sequence ID" value="NC_008358.1"/>
</dbReference>
<dbReference type="SMR" id="Q0C678"/>
<dbReference type="STRING" id="228405.HNE_0031"/>
<dbReference type="KEGG" id="hne:HNE_0031"/>
<dbReference type="eggNOG" id="COG0588">
    <property type="taxonomic scope" value="Bacteria"/>
</dbReference>
<dbReference type="HOGENOM" id="CLU_033323_1_1_5"/>
<dbReference type="UniPathway" id="UPA00109">
    <property type="reaction ID" value="UER00186"/>
</dbReference>
<dbReference type="Proteomes" id="UP000001959">
    <property type="component" value="Chromosome"/>
</dbReference>
<dbReference type="GO" id="GO:0004619">
    <property type="term" value="F:phosphoglycerate mutase activity"/>
    <property type="evidence" value="ECO:0007669"/>
    <property type="project" value="UniProtKB-EC"/>
</dbReference>
<dbReference type="GO" id="GO:0006094">
    <property type="term" value="P:gluconeogenesis"/>
    <property type="evidence" value="ECO:0007669"/>
    <property type="project" value="UniProtKB-UniRule"/>
</dbReference>
<dbReference type="GO" id="GO:0006096">
    <property type="term" value="P:glycolytic process"/>
    <property type="evidence" value="ECO:0007669"/>
    <property type="project" value="UniProtKB-UniRule"/>
</dbReference>
<dbReference type="CDD" id="cd07067">
    <property type="entry name" value="HP_PGM_like"/>
    <property type="match status" value="1"/>
</dbReference>
<dbReference type="FunFam" id="3.40.50.1240:FF:000003">
    <property type="entry name" value="2,3-bisphosphoglycerate-dependent phosphoglycerate mutase"/>
    <property type="match status" value="1"/>
</dbReference>
<dbReference type="Gene3D" id="3.40.50.1240">
    <property type="entry name" value="Phosphoglycerate mutase-like"/>
    <property type="match status" value="1"/>
</dbReference>
<dbReference type="HAMAP" id="MF_01039">
    <property type="entry name" value="PGAM_GpmA"/>
    <property type="match status" value="1"/>
</dbReference>
<dbReference type="InterPro" id="IPR013078">
    <property type="entry name" value="His_Pase_superF_clade-1"/>
</dbReference>
<dbReference type="InterPro" id="IPR029033">
    <property type="entry name" value="His_PPase_superfam"/>
</dbReference>
<dbReference type="InterPro" id="IPR001345">
    <property type="entry name" value="PG/BPGM_mutase_AS"/>
</dbReference>
<dbReference type="InterPro" id="IPR005952">
    <property type="entry name" value="Phosphogly_mut1"/>
</dbReference>
<dbReference type="NCBIfam" id="TIGR01258">
    <property type="entry name" value="pgm_1"/>
    <property type="match status" value="1"/>
</dbReference>
<dbReference type="NCBIfam" id="NF010713">
    <property type="entry name" value="PRK14115.1"/>
    <property type="match status" value="1"/>
</dbReference>
<dbReference type="PANTHER" id="PTHR11931">
    <property type="entry name" value="PHOSPHOGLYCERATE MUTASE"/>
    <property type="match status" value="1"/>
</dbReference>
<dbReference type="Pfam" id="PF00300">
    <property type="entry name" value="His_Phos_1"/>
    <property type="match status" value="1"/>
</dbReference>
<dbReference type="PIRSF" id="PIRSF000709">
    <property type="entry name" value="6PFK_2-Ptase"/>
    <property type="match status" value="1"/>
</dbReference>
<dbReference type="SMART" id="SM00855">
    <property type="entry name" value="PGAM"/>
    <property type="match status" value="1"/>
</dbReference>
<dbReference type="SUPFAM" id="SSF53254">
    <property type="entry name" value="Phosphoglycerate mutase-like"/>
    <property type="match status" value="1"/>
</dbReference>
<dbReference type="PROSITE" id="PS00175">
    <property type="entry name" value="PG_MUTASE"/>
    <property type="match status" value="1"/>
</dbReference>